<name>NDKB_MERBI</name>
<proteinExistence type="evidence at protein level"/>
<sequence>MEQTFIAIKPDGVQRGLCGEVMKFIQPMKHYLDLKDMPFYAGLCKYMSSGPVFAMVWEGEGIVKMMLGETNPADSKPGSIRGDFCINIGRNIIHGSDTVENAKMEVGLWFKPEEFVAYAEKAKAWVYE</sequence>
<gene>
    <name type="primary">nme2</name>
</gene>
<feature type="chain" id="PRO_0000306186" description="Nucleoside diphosphate kinase B">
    <location>
        <begin position="1"/>
        <end position="128"/>
    </location>
</feature>
<feature type="active site" description="Pros-phosphohistidine intermediate" evidence="1 4">
    <location>
        <position position="94"/>
    </location>
</feature>
<feature type="binding site" evidence="1">
    <location>
        <position position="9"/>
    </location>
    <ligand>
        <name>ATP</name>
        <dbReference type="ChEBI" id="CHEBI:30616"/>
    </ligand>
</feature>
<feature type="binding site" evidence="1">
    <location>
        <position position="39"/>
    </location>
    <ligand>
        <name>ATP</name>
        <dbReference type="ChEBI" id="CHEBI:30616"/>
    </ligand>
</feature>
<feature type="binding site" evidence="1">
    <location>
        <position position="70"/>
    </location>
    <ligand>
        <name>ATP</name>
        <dbReference type="ChEBI" id="CHEBI:30616"/>
    </ligand>
</feature>
<feature type="binding site" evidence="1">
    <location>
        <position position="81"/>
    </location>
    <ligand>
        <name>ATP</name>
        <dbReference type="ChEBI" id="CHEBI:30616"/>
    </ligand>
</feature>
<feature type="binding site" evidence="1">
    <location>
        <position position="91"/>
    </location>
    <ligand>
        <name>ATP</name>
        <dbReference type="ChEBI" id="CHEBI:30616"/>
    </ligand>
</feature>
<feature type="modified residue" description="N-acetylmethionine" evidence="5">
    <location>
        <position position="1"/>
    </location>
</feature>
<feature type="non-consecutive residues" evidence="6">
    <location>
        <begin position="23"/>
        <end position="24"/>
    </location>
</feature>
<feature type="non-consecutive residues" evidence="6">
    <location>
        <begin position="27"/>
        <end position="28"/>
    </location>
</feature>
<feature type="non-consecutive residues" evidence="6">
    <location>
        <begin position="29"/>
        <end position="30"/>
    </location>
</feature>
<feature type="non-consecutive residues" evidence="6">
    <location>
        <begin position="64"/>
        <end position="65"/>
    </location>
</feature>
<organism>
    <name type="scientific">Merluccius bilinearis</name>
    <name type="common">Silver hake</name>
    <dbReference type="NCBI Taxonomy" id="79698"/>
    <lineage>
        <taxon>Eukaryota</taxon>
        <taxon>Metazoa</taxon>
        <taxon>Chordata</taxon>
        <taxon>Craniata</taxon>
        <taxon>Vertebrata</taxon>
        <taxon>Euteleostomi</taxon>
        <taxon>Actinopterygii</taxon>
        <taxon>Neopterygii</taxon>
        <taxon>Teleostei</taxon>
        <taxon>Neoteleostei</taxon>
        <taxon>Acanthomorphata</taxon>
        <taxon>Zeiogadaria</taxon>
        <taxon>Gadariae</taxon>
        <taxon>Gadiformes</taxon>
        <taxon>Gadoidei</taxon>
        <taxon>Merlucciidae</taxon>
        <taxon>Merluccius</taxon>
    </lineage>
</organism>
<accession>P85290</accession>
<comment type="function">
    <text evidence="1">Major role in the synthesis of nucleoside triphosphates other than ATP.</text>
</comment>
<comment type="catalytic activity">
    <reaction evidence="1 4">
        <text>a 2'-deoxyribonucleoside 5'-diphosphate + ATP = a 2'-deoxyribonucleoside 5'-triphosphate + ADP</text>
        <dbReference type="Rhea" id="RHEA:44640"/>
        <dbReference type="ChEBI" id="CHEBI:30616"/>
        <dbReference type="ChEBI" id="CHEBI:61560"/>
        <dbReference type="ChEBI" id="CHEBI:73316"/>
        <dbReference type="ChEBI" id="CHEBI:456216"/>
        <dbReference type="EC" id="2.7.4.6"/>
    </reaction>
</comment>
<comment type="catalytic activity">
    <reaction evidence="1 4">
        <text>a ribonucleoside 5'-diphosphate + ATP = a ribonucleoside 5'-triphosphate + ADP</text>
        <dbReference type="Rhea" id="RHEA:18113"/>
        <dbReference type="ChEBI" id="CHEBI:30616"/>
        <dbReference type="ChEBI" id="CHEBI:57930"/>
        <dbReference type="ChEBI" id="CHEBI:61557"/>
        <dbReference type="ChEBI" id="CHEBI:456216"/>
        <dbReference type="EC" id="2.7.4.6"/>
    </reaction>
</comment>
<comment type="cofactor">
    <cofactor evidence="1">
        <name>Mg(2+)</name>
        <dbReference type="ChEBI" id="CHEBI:18420"/>
    </cofactor>
</comment>
<comment type="subcellular location">
    <subcellularLocation>
        <location evidence="2">Cytoplasm</location>
    </subcellularLocation>
    <subcellularLocation>
        <location evidence="2">Nucleus</location>
    </subcellularLocation>
    <subcellularLocation>
        <location evidence="2">Cell projection</location>
        <location evidence="2">Lamellipodium</location>
    </subcellularLocation>
    <subcellularLocation>
        <location evidence="2">Cell projection</location>
        <location evidence="2">Ruffle</location>
    </subcellularLocation>
</comment>
<comment type="similarity">
    <text evidence="3">Belongs to the NDK family.</text>
</comment>
<reference evidence="7" key="1">
    <citation type="journal article" date="2007" name="J. Proteome Res.">
        <title>De novo mass spectrometry sequencing and characterization of species-specific peptides from nucleoside diphosphate kinase B for the classification of commercial fish species belonging to the family Merlucciidae.</title>
        <authorList>
            <person name="Carrera M."/>
            <person name="Canas B."/>
            <person name="Pineiro C."/>
            <person name="Vazquez J."/>
            <person name="Gallardo J.M."/>
        </authorList>
    </citation>
    <scope>PROTEIN SEQUENCE</scope>
    <scope>ACETYLATION AT MET-1</scope>
    <source>
        <tissue evidence="5">White muscle</tissue>
    </source>
</reference>
<protein>
    <recommendedName>
        <fullName>Nucleoside diphosphate kinase B</fullName>
        <shortName>NDK B</shortName>
        <shortName>NDP kinase B</shortName>
        <ecNumber>2.7.4.6</ecNumber>
    </recommendedName>
</protein>
<keyword id="KW-0007">Acetylation</keyword>
<keyword id="KW-0067">ATP-binding</keyword>
<keyword id="KW-0131">Cell cycle</keyword>
<keyword id="KW-0966">Cell projection</keyword>
<keyword id="KW-0963">Cytoplasm</keyword>
<keyword id="KW-0903">Direct protein sequencing</keyword>
<keyword id="KW-0418">Kinase</keyword>
<keyword id="KW-0460">Magnesium</keyword>
<keyword id="KW-0479">Metal-binding</keyword>
<keyword id="KW-0546">Nucleotide metabolism</keyword>
<keyword id="KW-0547">Nucleotide-binding</keyword>
<keyword id="KW-0539">Nucleus</keyword>
<keyword id="KW-0597">Phosphoprotein</keyword>
<keyword id="KW-0808">Transferase</keyword>
<evidence type="ECO:0000250" key="1">
    <source>
        <dbReference type="UniProtKB" id="P15531"/>
    </source>
</evidence>
<evidence type="ECO:0000250" key="2">
    <source>
        <dbReference type="UniProtKB" id="P22392"/>
    </source>
</evidence>
<evidence type="ECO:0000255" key="3"/>
<evidence type="ECO:0000255" key="4">
    <source>
        <dbReference type="PROSITE-ProRule" id="PRU10030"/>
    </source>
</evidence>
<evidence type="ECO:0000269" key="5">
    <source>
    </source>
</evidence>
<evidence type="ECO:0000303" key="6">
    <source>
    </source>
</evidence>
<evidence type="ECO:0000305" key="7"/>
<dbReference type="EC" id="2.7.4.6"/>
<dbReference type="SMR" id="P85290"/>
<dbReference type="iPTMnet" id="P85290"/>
<dbReference type="BRENDA" id="2.7.4.6">
    <property type="organism ID" value="10456"/>
</dbReference>
<dbReference type="GO" id="GO:0005737">
    <property type="term" value="C:cytoplasm"/>
    <property type="evidence" value="ECO:0007669"/>
    <property type="project" value="UniProtKB-SubCell"/>
</dbReference>
<dbReference type="GO" id="GO:0030027">
    <property type="term" value="C:lamellipodium"/>
    <property type="evidence" value="ECO:0007669"/>
    <property type="project" value="UniProtKB-SubCell"/>
</dbReference>
<dbReference type="GO" id="GO:0005634">
    <property type="term" value="C:nucleus"/>
    <property type="evidence" value="ECO:0007669"/>
    <property type="project" value="UniProtKB-SubCell"/>
</dbReference>
<dbReference type="GO" id="GO:0001726">
    <property type="term" value="C:ruffle"/>
    <property type="evidence" value="ECO:0007669"/>
    <property type="project" value="UniProtKB-SubCell"/>
</dbReference>
<dbReference type="GO" id="GO:0005524">
    <property type="term" value="F:ATP binding"/>
    <property type="evidence" value="ECO:0007669"/>
    <property type="project" value="UniProtKB-KW"/>
</dbReference>
<dbReference type="GO" id="GO:0046872">
    <property type="term" value="F:metal ion binding"/>
    <property type="evidence" value="ECO:0007669"/>
    <property type="project" value="UniProtKB-KW"/>
</dbReference>
<dbReference type="GO" id="GO:0004550">
    <property type="term" value="F:nucleoside diphosphate kinase activity"/>
    <property type="evidence" value="ECO:0007669"/>
    <property type="project" value="UniProtKB-EC"/>
</dbReference>
<dbReference type="GO" id="GO:0009117">
    <property type="term" value="P:nucleotide metabolic process"/>
    <property type="evidence" value="ECO:0007669"/>
    <property type="project" value="UniProtKB-KW"/>
</dbReference>
<dbReference type="CDD" id="cd04413">
    <property type="entry name" value="NDPk_I"/>
    <property type="match status" value="1"/>
</dbReference>
<dbReference type="FunFam" id="3.30.70.141:FF:000039">
    <property type="entry name" value="Nucleoside diphosphate kinase B"/>
    <property type="match status" value="1"/>
</dbReference>
<dbReference type="Gene3D" id="3.30.70.141">
    <property type="entry name" value="Nucleoside diphosphate kinase-like domain"/>
    <property type="match status" value="1"/>
</dbReference>
<dbReference type="InterPro" id="IPR034907">
    <property type="entry name" value="NDK-like_dom"/>
</dbReference>
<dbReference type="InterPro" id="IPR036850">
    <property type="entry name" value="NDK-like_dom_sf"/>
</dbReference>
<dbReference type="PANTHER" id="PTHR11349">
    <property type="entry name" value="NUCLEOSIDE DIPHOSPHATE KINASE"/>
    <property type="match status" value="1"/>
</dbReference>
<dbReference type="Pfam" id="PF00334">
    <property type="entry name" value="NDK"/>
    <property type="match status" value="1"/>
</dbReference>
<dbReference type="SMART" id="SM00562">
    <property type="entry name" value="NDK"/>
    <property type="match status" value="1"/>
</dbReference>
<dbReference type="SUPFAM" id="SSF54919">
    <property type="entry name" value="Nucleoside diphosphate kinase, NDK"/>
    <property type="match status" value="1"/>
</dbReference>
<dbReference type="PROSITE" id="PS51374">
    <property type="entry name" value="NDPK_LIKE"/>
    <property type="match status" value="1"/>
</dbReference>